<proteinExistence type="inferred from homology"/>
<accession>A4VYN8</accession>
<protein>
    <recommendedName>
        <fullName evidence="1">Putative pre-16S rRNA nuclease</fullName>
        <ecNumber evidence="1">3.1.-.-</ecNumber>
    </recommendedName>
</protein>
<reference key="1">
    <citation type="journal article" date="2007" name="PLoS ONE">
        <title>A glimpse of streptococcal toxic shock syndrome from comparative genomics of S. suis 2 Chinese isolates.</title>
        <authorList>
            <person name="Chen C."/>
            <person name="Tang J."/>
            <person name="Dong W."/>
            <person name="Wang C."/>
            <person name="Feng Y."/>
            <person name="Wang J."/>
            <person name="Zheng F."/>
            <person name="Pan X."/>
            <person name="Liu D."/>
            <person name="Li M."/>
            <person name="Song Y."/>
            <person name="Zhu X."/>
            <person name="Sun H."/>
            <person name="Feng T."/>
            <person name="Guo Z."/>
            <person name="Ju A."/>
            <person name="Ge J."/>
            <person name="Dong Y."/>
            <person name="Sun W."/>
            <person name="Jiang Y."/>
            <person name="Wang J."/>
            <person name="Yan J."/>
            <person name="Yang H."/>
            <person name="Wang X."/>
            <person name="Gao G.F."/>
            <person name="Yang R."/>
            <person name="Wang J."/>
            <person name="Yu J."/>
        </authorList>
    </citation>
    <scope>NUCLEOTIDE SEQUENCE [LARGE SCALE GENOMIC DNA]</scope>
    <source>
        <strain>98HAH33</strain>
    </source>
</reference>
<gene>
    <name type="ordered locus">SSU98_0067</name>
</gene>
<keyword id="KW-0963">Cytoplasm</keyword>
<keyword id="KW-0378">Hydrolase</keyword>
<keyword id="KW-0540">Nuclease</keyword>
<keyword id="KW-0690">Ribosome biogenesis</keyword>
<name>YQGF_STRS2</name>
<evidence type="ECO:0000255" key="1">
    <source>
        <dbReference type="HAMAP-Rule" id="MF_00651"/>
    </source>
</evidence>
<sequence>MRIMGLDVGSKTVGVAISDPLGFTAQGLEIIPIDEEKGEFGLERLTELVEQYKVDKFVVGLPKNMNNTSGPRVEASQAYGDLLTERYKLPVDYQDERLTTVAAERMLIEQADISRGKRKKVIDKLAAQLILQNYLDRTF</sequence>
<comment type="function">
    <text evidence="1">Could be a nuclease involved in processing of the 5'-end of pre-16S rRNA.</text>
</comment>
<comment type="subcellular location">
    <subcellularLocation>
        <location evidence="1">Cytoplasm</location>
    </subcellularLocation>
</comment>
<comment type="similarity">
    <text evidence="1">Belongs to the YqgF nuclease family.</text>
</comment>
<dbReference type="EC" id="3.1.-.-" evidence="1"/>
<dbReference type="EMBL" id="CP000408">
    <property type="protein sequence ID" value="ABP91227.1"/>
    <property type="molecule type" value="Genomic_DNA"/>
</dbReference>
<dbReference type="SMR" id="A4VYN8"/>
<dbReference type="KEGG" id="ssv:SSU98_0067"/>
<dbReference type="HOGENOM" id="CLU_098240_2_0_9"/>
<dbReference type="BioCyc" id="SSUI391296:GI2E-86-MONOMER"/>
<dbReference type="GO" id="GO:0005829">
    <property type="term" value="C:cytosol"/>
    <property type="evidence" value="ECO:0007669"/>
    <property type="project" value="TreeGrafter"/>
</dbReference>
<dbReference type="GO" id="GO:0004518">
    <property type="term" value="F:nuclease activity"/>
    <property type="evidence" value="ECO:0007669"/>
    <property type="project" value="UniProtKB-KW"/>
</dbReference>
<dbReference type="GO" id="GO:0000967">
    <property type="term" value="P:rRNA 5'-end processing"/>
    <property type="evidence" value="ECO:0007669"/>
    <property type="project" value="UniProtKB-UniRule"/>
</dbReference>
<dbReference type="CDD" id="cd16964">
    <property type="entry name" value="YqgF"/>
    <property type="match status" value="1"/>
</dbReference>
<dbReference type="FunFam" id="3.30.420.140:FF:000003">
    <property type="entry name" value="Putative pre-16S rRNA nuclease"/>
    <property type="match status" value="1"/>
</dbReference>
<dbReference type="Gene3D" id="3.30.420.140">
    <property type="entry name" value="YqgF/RNase H-like domain"/>
    <property type="match status" value="1"/>
</dbReference>
<dbReference type="HAMAP" id="MF_00651">
    <property type="entry name" value="Nuclease_YqgF"/>
    <property type="match status" value="1"/>
</dbReference>
<dbReference type="InterPro" id="IPR012337">
    <property type="entry name" value="RNaseH-like_sf"/>
</dbReference>
<dbReference type="InterPro" id="IPR005227">
    <property type="entry name" value="YqgF"/>
</dbReference>
<dbReference type="InterPro" id="IPR006641">
    <property type="entry name" value="YqgF/RNaseH-like_dom"/>
</dbReference>
<dbReference type="InterPro" id="IPR037027">
    <property type="entry name" value="YqgF/RNaseH-like_dom_sf"/>
</dbReference>
<dbReference type="NCBIfam" id="TIGR00250">
    <property type="entry name" value="RNAse_H_YqgF"/>
    <property type="match status" value="1"/>
</dbReference>
<dbReference type="PANTHER" id="PTHR33317">
    <property type="entry name" value="POLYNUCLEOTIDYL TRANSFERASE, RIBONUCLEASE H-LIKE SUPERFAMILY PROTEIN"/>
    <property type="match status" value="1"/>
</dbReference>
<dbReference type="PANTHER" id="PTHR33317:SF4">
    <property type="entry name" value="POLYNUCLEOTIDYL TRANSFERASE, RIBONUCLEASE H-LIKE SUPERFAMILY PROTEIN"/>
    <property type="match status" value="1"/>
</dbReference>
<dbReference type="Pfam" id="PF03652">
    <property type="entry name" value="RuvX"/>
    <property type="match status" value="1"/>
</dbReference>
<dbReference type="SMART" id="SM00732">
    <property type="entry name" value="YqgFc"/>
    <property type="match status" value="1"/>
</dbReference>
<dbReference type="SUPFAM" id="SSF53098">
    <property type="entry name" value="Ribonuclease H-like"/>
    <property type="match status" value="1"/>
</dbReference>
<organism>
    <name type="scientific">Streptococcus suis (strain 98HAH33)</name>
    <dbReference type="NCBI Taxonomy" id="391296"/>
    <lineage>
        <taxon>Bacteria</taxon>
        <taxon>Bacillati</taxon>
        <taxon>Bacillota</taxon>
        <taxon>Bacilli</taxon>
        <taxon>Lactobacillales</taxon>
        <taxon>Streptococcaceae</taxon>
        <taxon>Streptococcus</taxon>
    </lineage>
</organism>
<feature type="chain" id="PRO_1000061572" description="Putative pre-16S rRNA nuclease">
    <location>
        <begin position="1"/>
        <end position="139"/>
    </location>
</feature>